<feature type="chain" id="PRO_0000299374" description="Serine/threonine-protein phosphatase 4 regulatory subunit 2">
    <location>
        <begin position="1"/>
        <end position="401"/>
    </location>
</feature>
<feature type="region of interest" description="Disordered" evidence="2">
    <location>
        <begin position="139"/>
        <end position="401"/>
    </location>
</feature>
<feature type="compositionally biased region" description="Polar residues" evidence="2">
    <location>
        <begin position="139"/>
        <end position="149"/>
    </location>
</feature>
<feature type="compositionally biased region" description="Polar residues" evidence="2">
    <location>
        <begin position="156"/>
        <end position="170"/>
    </location>
</feature>
<feature type="compositionally biased region" description="Polar residues" evidence="2">
    <location>
        <begin position="183"/>
        <end position="203"/>
    </location>
</feature>
<feature type="compositionally biased region" description="Polar residues" evidence="2">
    <location>
        <begin position="339"/>
        <end position="349"/>
    </location>
</feature>
<feature type="compositionally biased region" description="Polar residues" evidence="2">
    <location>
        <begin position="373"/>
        <end position="385"/>
    </location>
</feature>
<feature type="compositionally biased region" description="Acidic residues" evidence="2">
    <location>
        <begin position="386"/>
        <end position="401"/>
    </location>
</feature>
<feature type="sequence conflict" description="In Ref. 2; AAH84901." evidence="3" ref="2">
    <original>A</original>
    <variation>T</variation>
    <location>
        <position position="308"/>
    </location>
</feature>
<feature type="sequence conflict" description="In Ref. 2; AAH84901." evidence="3" ref="2">
    <location>
        <position position="355"/>
    </location>
</feature>
<evidence type="ECO:0000250" key="1"/>
<evidence type="ECO:0000256" key="2">
    <source>
        <dbReference type="SAM" id="MobiDB-lite"/>
    </source>
</evidence>
<evidence type="ECO:0000305" key="3"/>
<gene>
    <name type="primary">ppp4r2</name>
    <name type="ORF">TNeu083g13.1</name>
</gene>
<organism>
    <name type="scientific">Xenopus tropicalis</name>
    <name type="common">Western clawed frog</name>
    <name type="synonym">Silurana tropicalis</name>
    <dbReference type="NCBI Taxonomy" id="8364"/>
    <lineage>
        <taxon>Eukaryota</taxon>
        <taxon>Metazoa</taxon>
        <taxon>Chordata</taxon>
        <taxon>Craniata</taxon>
        <taxon>Vertebrata</taxon>
        <taxon>Euteleostomi</taxon>
        <taxon>Amphibia</taxon>
        <taxon>Batrachia</taxon>
        <taxon>Anura</taxon>
        <taxon>Pipoidea</taxon>
        <taxon>Pipidae</taxon>
        <taxon>Xenopodinae</taxon>
        <taxon>Xenopus</taxon>
        <taxon>Silurana</taxon>
    </lineage>
</organism>
<name>PP4R2_XENTR</name>
<protein>
    <recommendedName>
        <fullName>Serine/threonine-protein phosphatase 4 regulatory subunit 2</fullName>
    </recommendedName>
</protein>
<dbReference type="EMBL" id="CR760404">
    <property type="protein sequence ID" value="CAJ82779.1"/>
    <property type="molecule type" value="mRNA"/>
</dbReference>
<dbReference type="EMBL" id="BC084901">
    <property type="protein sequence ID" value="AAH84901.1"/>
    <property type="molecule type" value="mRNA"/>
</dbReference>
<dbReference type="RefSeq" id="NP_001011151.1">
    <property type="nucleotide sequence ID" value="NM_001011151.1"/>
</dbReference>
<dbReference type="FunCoup" id="Q28IG6">
    <property type="interactions" value="2727"/>
</dbReference>
<dbReference type="STRING" id="8364.ENSXETP00000011175"/>
<dbReference type="PaxDb" id="8364-ENSXETP00000062639"/>
<dbReference type="DNASU" id="496569"/>
<dbReference type="GeneID" id="496569"/>
<dbReference type="KEGG" id="xtr:496569"/>
<dbReference type="AGR" id="Xenbase:XB-GENE-6258889"/>
<dbReference type="CTD" id="151987"/>
<dbReference type="Xenbase" id="XB-GENE-6258889">
    <property type="gene designation" value="ppp4r2"/>
</dbReference>
<dbReference type="eggNOG" id="KOG3175">
    <property type="taxonomic scope" value="Eukaryota"/>
</dbReference>
<dbReference type="HOGENOM" id="CLU_043908_1_1_1"/>
<dbReference type="InParanoid" id="Q28IG6"/>
<dbReference type="OrthoDB" id="341898at2759"/>
<dbReference type="Reactome" id="R-XTR-5693607">
    <property type="pathway name" value="Processing of DNA double-strand break ends"/>
</dbReference>
<dbReference type="Proteomes" id="UP000008143">
    <property type="component" value="Chromosome 4"/>
</dbReference>
<dbReference type="Bgee" id="ENSXETG00000015932">
    <property type="expression patterns" value="Expressed in 2-cell stage embryo and 13 other cell types or tissues"/>
</dbReference>
<dbReference type="GO" id="GO:0030289">
    <property type="term" value="C:protein phosphatase 4 complex"/>
    <property type="evidence" value="ECO:0007669"/>
    <property type="project" value="InterPro"/>
</dbReference>
<dbReference type="GO" id="GO:0019888">
    <property type="term" value="F:protein phosphatase regulator activity"/>
    <property type="evidence" value="ECO:0007669"/>
    <property type="project" value="InterPro"/>
</dbReference>
<dbReference type="InterPro" id="IPR015267">
    <property type="entry name" value="PPP4R2"/>
</dbReference>
<dbReference type="PANTHER" id="PTHR16487">
    <property type="entry name" value="PPP4R2-RELATED PROTEIN"/>
    <property type="match status" value="1"/>
</dbReference>
<dbReference type="PANTHER" id="PTHR16487:SF0">
    <property type="entry name" value="PROTEIN PHOSPHATASE 4 REGULATORY SUBUNIT 2-RELATED"/>
    <property type="match status" value="1"/>
</dbReference>
<dbReference type="Pfam" id="PF09184">
    <property type="entry name" value="PPP4R2"/>
    <property type="match status" value="1"/>
</dbReference>
<accession>Q28IG6</accession>
<accession>Q5U4Y9</accession>
<comment type="function">
    <text evidence="1">Regulatory subunit of serine/threonine-protein phosphatase 4 (PP4).</text>
</comment>
<comment type="subunit">
    <text evidence="1">Serine/threonine-protein phosphatase 4 (PP4) occurs in different assemblies of the catalytic and one or more regulatory subunits.</text>
</comment>
<comment type="similarity">
    <text evidence="3">Belongs to the PPP4R2 family.</text>
</comment>
<keyword id="KW-1185">Reference proteome</keyword>
<reference key="1">
    <citation type="submission" date="2006-10" db="EMBL/GenBank/DDBJ databases">
        <authorList>
            <consortium name="Sanger Xenopus tropicalis EST/cDNA project"/>
        </authorList>
    </citation>
    <scope>NUCLEOTIDE SEQUENCE [LARGE SCALE MRNA]</scope>
    <source>
        <tissue>Neurula</tissue>
    </source>
</reference>
<reference key="2">
    <citation type="submission" date="2004-10" db="EMBL/GenBank/DDBJ databases">
        <authorList>
            <consortium name="NIH - Xenopus Gene Collection (XGC) project"/>
        </authorList>
    </citation>
    <scope>NUCLEOTIDE SEQUENCE [LARGE SCALE MRNA]</scope>
    <source>
        <tissue>Embryo</tissue>
    </source>
</reference>
<sequence>MDVDRLQEALKDFEKRGKKEASSELDQFLCHVAKTGETVVQWPQFKEYFVFKLEKVMDDFRSSAPDQRGSPNPNVEYIPFDEMKQRILKIVTGFNGTPFTIQRLCELLTDPRRNYTGTDKFLRGVEKNVMVVSCVYPSSEKNSSTSLNRMNGVMFPSNSQSYTDRSNVNGPGTPRPVNRPKFSLSSPMTTNGLPDSMENNESDLQQKEKSQSDSVASEDESQATTPKNKHSAEDSAETEEHEVKRLKFDTEEEEAACANPDASSEVSTEMAEEAESASASADKDKESCQSAQAADEESLMTPSESTEADSGERDSETVSVTEESSEESHQMEESEQSETACSLNSEEQNSAAAAASTVGTDTSEEEHLGTFGVKSTETLTLSPMENSEEATDAPEEPMDQD</sequence>
<proteinExistence type="evidence at transcript level"/>